<proteinExistence type="evidence at protein level"/>
<reference key="1">
    <citation type="journal article" date="1987" name="EMBO J.">
        <title>The yeast ubiquitin genes: a family of natural gene fusions.</title>
        <authorList>
            <person name="Oezkaynak E."/>
            <person name="Finley D."/>
            <person name="Solomon M.J."/>
            <person name="Varshavsky A."/>
        </authorList>
    </citation>
    <scope>NUCLEOTIDE SEQUENCE [GENOMIC DNA]</scope>
</reference>
<reference key="2">
    <citation type="journal article" date="1997" name="Nature">
        <title>The nucleotide sequence of Saccharomyces cerevisiae chromosome IX.</title>
        <authorList>
            <person name="Churcher C.M."/>
            <person name="Bowman S."/>
            <person name="Badcock K."/>
            <person name="Bankier A.T."/>
            <person name="Brown D."/>
            <person name="Chillingworth T."/>
            <person name="Connor R."/>
            <person name="Devlin K."/>
            <person name="Gentles S."/>
            <person name="Hamlin N."/>
            <person name="Harris D.E."/>
            <person name="Horsnell T."/>
            <person name="Hunt S."/>
            <person name="Jagels K."/>
            <person name="Jones M."/>
            <person name="Lye G."/>
            <person name="Moule S."/>
            <person name="Odell C."/>
            <person name="Pearson D."/>
            <person name="Rajandream M.A."/>
            <person name="Rice P."/>
            <person name="Rowley N."/>
            <person name="Skelton J."/>
            <person name="Smith V."/>
            <person name="Walsh S.V."/>
            <person name="Whitehead S."/>
            <person name="Barrell B.G."/>
        </authorList>
    </citation>
    <scope>NUCLEOTIDE SEQUENCE [LARGE SCALE GENOMIC DNA]</scope>
    <source>
        <strain>ATCC 204508 / S288c</strain>
    </source>
</reference>
<reference key="3">
    <citation type="journal article" date="2014" name="G3 (Bethesda)">
        <title>The reference genome sequence of Saccharomyces cerevisiae: Then and now.</title>
        <authorList>
            <person name="Engel S.R."/>
            <person name="Dietrich F.S."/>
            <person name="Fisk D.G."/>
            <person name="Binkley G."/>
            <person name="Balakrishnan R."/>
            <person name="Costanzo M.C."/>
            <person name="Dwight S.S."/>
            <person name="Hitz B.C."/>
            <person name="Karra K."/>
            <person name="Nash R.S."/>
            <person name="Weng S."/>
            <person name="Wong E.D."/>
            <person name="Lloyd P."/>
            <person name="Skrzypek M.S."/>
            <person name="Miyasato S.R."/>
            <person name="Simison M."/>
            <person name="Cherry J.M."/>
        </authorList>
    </citation>
    <scope>GENOME REANNOTATION</scope>
    <source>
        <strain>ATCC 204508 / S288c</strain>
    </source>
</reference>
<reference key="4">
    <citation type="journal article" date="1995" name="J. Biol. Chem.">
        <title>A proteolytic pathway that recognizes ubiquitin as a degradation signal.</title>
        <authorList>
            <person name="Johnson E.S."/>
            <person name="Ma P.C.M."/>
            <person name="Ota I.M."/>
            <person name="Varshavsky A."/>
        </authorList>
    </citation>
    <scope>MUTAGENESIS OF LYS-29; LYS-48 AND LYS-63</scope>
</reference>
<reference key="5">
    <citation type="journal article" date="1995" name="Mol. Cell. Biol.">
        <title>A ubiquitin mutant with specific defects in DNA repair and multiubiquitination.</title>
        <authorList>
            <person name="Spence J."/>
            <person name="Sadis S."/>
            <person name="Haas A.L."/>
            <person name="Finley D."/>
        </authorList>
    </citation>
    <scope>MUTAGENESIS OF LYSINE RESIDUES IN UBIQUITIN</scope>
</reference>
<reference key="6">
    <citation type="journal article" date="1998" name="Yeast">
        <title>The list of cytoplasmic ribosomal proteins of Saccharomyces cerevisiae.</title>
        <authorList>
            <person name="Planta R.J."/>
            <person name="Mager W.H."/>
        </authorList>
    </citation>
    <scope>NOMENCLATURE</scope>
    <scope>SUBUNIT (L40)</scope>
</reference>
<reference key="7">
    <citation type="journal article" date="2003" name="Nature">
        <title>Global analysis of protein localization in budding yeast.</title>
        <authorList>
            <person name="Huh W.-K."/>
            <person name="Falvo J.V."/>
            <person name="Gerke L.C."/>
            <person name="Carroll A.S."/>
            <person name="Howson R.W."/>
            <person name="Weissman J.S."/>
            <person name="O'Shea E.K."/>
        </authorList>
    </citation>
    <scope>SUBCELLULAR LOCATION [LARGE SCALE ANALYSIS] (L40)</scope>
</reference>
<reference key="8">
    <citation type="journal article" date="2003" name="Nature">
        <title>Global analysis of protein expression in yeast.</title>
        <authorList>
            <person name="Ghaemmaghami S."/>
            <person name="Huh W.-K."/>
            <person name="Bower K."/>
            <person name="Howson R.W."/>
            <person name="Belle A."/>
            <person name="Dephoure N."/>
            <person name="O'Shea E.K."/>
            <person name="Weissman J.S."/>
        </authorList>
    </citation>
    <scope>LEVEL OF PROTEIN EXPRESSION [LARGE SCALE ANALYSIS] (L40)</scope>
</reference>
<reference key="9">
    <citation type="journal article" date="2012" name="Proc. Natl. Acad. Sci. U.S.A.">
        <title>N-terminal acetylome analyses and functional insights of the N-terminal acetyltransferase NatB.</title>
        <authorList>
            <person name="Van Damme P."/>
            <person name="Lasa M."/>
            <person name="Polevoda B."/>
            <person name="Gazquez C."/>
            <person name="Elosegui-Artola A."/>
            <person name="Kim D.S."/>
            <person name="De Juan-Pardo E."/>
            <person name="Demeyer K."/>
            <person name="Hole K."/>
            <person name="Larrea E."/>
            <person name="Timmerman E."/>
            <person name="Prieto J."/>
            <person name="Arnesen T."/>
            <person name="Sherman F."/>
            <person name="Gevaert K."/>
            <person name="Aldabe R."/>
        </authorList>
    </citation>
    <scope>IDENTIFICATION BY MASS SPECTROMETRY [LARGE SCALE ANALYSIS]</scope>
</reference>
<reference key="10">
    <citation type="journal article" date="2012" name="Proteomics">
        <title>Sites of ubiquitin attachment in Saccharomyces cerevisiae.</title>
        <authorList>
            <person name="Starita L.M."/>
            <person name="Lo R.S."/>
            <person name="Eng J.K."/>
            <person name="von Haller P.D."/>
            <person name="Fields S."/>
        </authorList>
    </citation>
    <scope>UBIQUITINATION [LARGE SCALE ANALYSIS] AT LYS-93</scope>
    <scope>IDENTIFICATION BY MASS SPECTROMETRY [LARGE SCALE ANALYSIS]</scope>
</reference>
<reference key="11">
    <citation type="journal article" date="2013" name="Proc. Natl. Acad. Sci. U.S.A.">
        <title>A ribosome-specialized translation initiation pathway is required for cap-dependent translation of vesicular stomatitis virus mRNAs.</title>
        <authorList>
            <person name="Lee A.S."/>
            <person name="Burdeinick-Kerr R."/>
            <person name="Whelan S.P."/>
        </authorList>
    </citation>
    <scope>FUNCTION</scope>
    <scope>SUBUNIT</scope>
</reference>
<reference key="12">
    <citation type="journal article" date="2014" name="Curr. Opin. Struct. Biol.">
        <title>A new system for naming ribosomal proteins.</title>
        <authorList>
            <person name="Ban N."/>
            <person name="Beckmann R."/>
            <person name="Cate J.H.D."/>
            <person name="Dinman J.D."/>
            <person name="Dragon F."/>
            <person name="Ellis S.R."/>
            <person name="Lafontaine D.L.J."/>
            <person name="Lindahl L."/>
            <person name="Liljas A."/>
            <person name="Lipton J.M."/>
            <person name="McAlear M.A."/>
            <person name="Moore P.B."/>
            <person name="Noller H.F."/>
            <person name="Ortega J."/>
            <person name="Panse V.G."/>
            <person name="Ramakrishnan V."/>
            <person name="Spahn C.M.T."/>
            <person name="Steitz T.A."/>
            <person name="Tchorzewski M."/>
            <person name="Tollervey D."/>
            <person name="Warren A.J."/>
            <person name="Williamson J.R."/>
            <person name="Wilson D."/>
            <person name="Yonath A."/>
            <person name="Yusupov M."/>
        </authorList>
    </citation>
    <scope>NOMENCLATURE</scope>
</reference>
<reference key="13">
    <citation type="journal article" date="2010" name="Science">
        <title>Crystal structure of the eukaryotic ribosome.</title>
        <authorList>
            <person name="Ben-Shem A."/>
            <person name="Jenner L."/>
            <person name="Yusupova G."/>
            <person name="Yusupov M."/>
        </authorList>
    </citation>
    <scope>X-RAY CRYSTALLOGRAPHY (4.0 ANGSTROMS) OF 80S RIBOSOME</scope>
</reference>
<reference key="14">
    <citation type="journal article" date="2011" name="Science">
        <title>The structure of the eukaryotic ribosome at 3.0 A resolution.</title>
        <authorList>
            <person name="Ben-Shem A."/>
            <person name="Garreau de Loubresse N."/>
            <person name="Melnikov S."/>
            <person name="Jenner L."/>
            <person name="Yusupova G."/>
            <person name="Yusupov M."/>
        </authorList>
    </citation>
    <scope>X-RAY CRYSTALLOGRAPHY (3.0 ANGSTROMS) OF 80S RIBOSOME</scope>
    <scope>SUBUNIT</scope>
    <scope>SUBCELLULAR LOCATION</scope>
</reference>
<reference key="15">
    <citation type="journal article" date="2012" name="Nat. Struct. Mol. Biol.">
        <title>Cryo-EM structures of Arx1 and maturation factors Rei1 and Jjj1 bound to the 60S ribosomal subunit.</title>
        <authorList>
            <person name="Greber B.J."/>
            <person name="Boehringer D."/>
            <person name="Montellese C."/>
            <person name="Ban N."/>
        </authorList>
    </citation>
    <scope>STRUCTURE BY ELECTRON MICROSCOPY (8.1 ANGSTROMS) OF 77-128 WITHIN THE 60S RIBOSOMAL SUBUNIT</scope>
</reference>
<protein>
    <recommendedName>
        <fullName evidence="9">Ubiquitin-ribosomal protein eL40A fusion protein</fullName>
    </recommendedName>
    <component>
        <recommendedName>
            <fullName>Ubiquitin</fullName>
        </recommendedName>
    </component>
    <component>
        <recommendedName>
            <fullName evidence="7">Large ribosomal subunit protein eL40A</fullName>
        </recommendedName>
        <alternativeName>
            <fullName evidence="8">60S ribosomal protein L40-A</fullName>
        </alternativeName>
        <alternativeName>
            <fullName>CEP52</fullName>
        </alternativeName>
    </component>
</protein>
<feature type="chain" id="PRO_0000396454" description="Ubiquitin">
    <location>
        <begin position="1"/>
        <end position="76"/>
    </location>
</feature>
<feature type="chain" id="PRO_0000138775" description="Large ribosomal subunit protein eL40A">
    <location>
        <begin position="77"/>
        <end position="128"/>
    </location>
</feature>
<feature type="domain" description="Ubiquitin-like" evidence="2">
    <location>
        <begin position="1"/>
        <end position="76"/>
    </location>
</feature>
<feature type="cross-link" description="Glycyl lysine isopeptide (Gly-Lys) (interchain with K-? in acceptor proteins)">
    <location>
        <position position="76"/>
    </location>
</feature>
<feature type="cross-link" description="Glycyl lysine isopeptide (Lys-Gly) (interchain with G-Cter in ubiquitin)" evidence="13">
    <location>
        <position position="93"/>
    </location>
</feature>
<feature type="mutagenesis site" description="Deficiency in ubiquitin-protein conjugate formation." evidence="6">
    <original>K</original>
    <variation>R</variation>
    <location>
        <position position="29"/>
    </location>
</feature>
<feature type="mutagenesis site" description="Deficiency in ubiquitin-protein conjugate formation." evidence="6">
    <original>K</original>
    <variation>R</variation>
    <location>
        <position position="48"/>
    </location>
</feature>
<feature type="mutagenesis site" description="Deficiency in ubiquitin-protein conjugate formation. Loss of DNA repair function." evidence="6">
    <original>K</original>
    <variation>R</variation>
    <location>
        <position position="63"/>
    </location>
</feature>
<feature type="strand" evidence="14">
    <location>
        <begin position="1"/>
        <end position="6"/>
    </location>
</feature>
<feature type="strand" evidence="15">
    <location>
        <begin position="8"/>
        <end position="10"/>
    </location>
</feature>
<feature type="strand" evidence="14">
    <location>
        <begin position="12"/>
        <end position="18"/>
    </location>
</feature>
<feature type="helix" evidence="14">
    <location>
        <begin position="23"/>
        <end position="34"/>
    </location>
</feature>
<feature type="helix" evidence="14">
    <location>
        <begin position="38"/>
        <end position="40"/>
    </location>
</feature>
<feature type="strand" evidence="14">
    <location>
        <begin position="41"/>
        <end position="45"/>
    </location>
</feature>
<feature type="helix" evidence="14">
    <location>
        <begin position="57"/>
        <end position="59"/>
    </location>
</feature>
<feature type="strand" evidence="14">
    <location>
        <begin position="66"/>
        <end position="71"/>
    </location>
</feature>
<sequence length="128" mass="14554">MQIFVKTLTGKTITLEVESSDTIDNVKSKIQDKEGIPPDQQRLIFAGKQLEDGRTLSDYNIQKESTLHLVLRLRGGIIEPSLKALASKYNCDKSVCRKCYARLPPRATNCRKRKCGHTNQLRPKKKLK</sequence>
<dbReference type="EMBL" id="X05728">
    <property type="protein sequence ID" value="CAA29195.1"/>
    <property type="molecule type" value="Genomic_DNA"/>
</dbReference>
<dbReference type="EMBL" id="X05729">
    <property type="protein sequence ID" value="CAA29196.1"/>
    <property type="molecule type" value="Genomic_DNA"/>
</dbReference>
<dbReference type="EMBL" id="Z38059">
    <property type="protein sequence ID" value="CAA86130.1"/>
    <property type="molecule type" value="Genomic_DNA"/>
</dbReference>
<dbReference type="EMBL" id="BK006942">
    <property type="protein sequence ID" value="DAA08405.1"/>
    <property type="molecule type" value="Genomic_DNA"/>
</dbReference>
<dbReference type="PIR" id="A29456">
    <property type="entry name" value="A29456"/>
</dbReference>
<dbReference type="RefSeq" id="NP_012118.1">
    <property type="nucleotide sequence ID" value="NM_001179496.1"/>
</dbReference>
<dbReference type="PDB" id="3J6X">
    <property type="method" value="EM"/>
    <property type="resolution" value="6.10 A"/>
    <property type="chains" value="80=1-128"/>
</dbReference>
<dbReference type="PDB" id="3J6Y">
    <property type="method" value="EM"/>
    <property type="resolution" value="6.10 A"/>
    <property type="chains" value="80=1-128"/>
</dbReference>
<dbReference type="PDB" id="3J77">
    <property type="method" value="EM"/>
    <property type="resolution" value="6.20 A"/>
    <property type="chains" value="90=1-128"/>
</dbReference>
<dbReference type="PDB" id="3J78">
    <property type="method" value="EM"/>
    <property type="resolution" value="6.30 A"/>
    <property type="chains" value="90=1-128"/>
</dbReference>
<dbReference type="PDB" id="4U3M">
    <property type="method" value="X-ray"/>
    <property type="resolution" value="3.00 A"/>
    <property type="chains" value="Q0/q0=77-128"/>
</dbReference>
<dbReference type="PDB" id="4U3N">
    <property type="method" value="X-ray"/>
    <property type="resolution" value="3.20 A"/>
    <property type="chains" value="Q0/q0=77-128"/>
</dbReference>
<dbReference type="PDB" id="4U3U">
    <property type="method" value="X-ray"/>
    <property type="resolution" value="2.90 A"/>
    <property type="chains" value="Q0/q0=77-128"/>
</dbReference>
<dbReference type="PDB" id="4U4N">
    <property type="method" value="X-ray"/>
    <property type="resolution" value="3.10 A"/>
    <property type="chains" value="Q0/q0=77-128"/>
</dbReference>
<dbReference type="PDB" id="4U4O">
    <property type="method" value="X-ray"/>
    <property type="resolution" value="3.60 A"/>
    <property type="chains" value="Q0/q0=77-128"/>
</dbReference>
<dbReference type="PDB" id="4U4Q">
    <property type="method" value="X-ray"/>
    <property type="resolution" value="3.00 A"/>
    <property type="chains" value="Q0/q0=77-128"/>
</dbReference>
<dbReference type="PDB" id="4U4R">
    <property type="method" value="X-ray"/>
    <property type="resolution" value="2.80 A"/>
    <property type="chains" value="Q0/q0=77-128"/>
</dbReference>
<dbReference type="PDB" id="4U4U">
    <property type="method" value="X-ray"/>
    <property type="resolution" value="3.00 A"/>
    <property type="chains" value="Q0/q0=77-128"/>
</dbReference>
<dbReference type="PDB" id="4U4Y">
    <property type="method" value="X-ray"/>
    <property type="resolution" value="3.20 A"/>
    <property type="chains" value="Q0/q0=77-128"/>
</dbReference>
<dbReference type="PDB" id="4U4Z">
    <property type="method" value="X-ray"/>
    <property type="resolution" value="3.10 A"/>
    <property type="chains" value="Q0/q0=77-128"/>
</dbReference>
<dbReference type="PDB" id="4U50">
    <property type="method" value="X-ray"/>
    <property type="resolution" value="3.20 A"/>
    <property type="chains" value="Q0/q0=77-128"/>
</dbReference>
<dbReference type="PDB" id="4U51">
    <property type="method" value="X-ray"/>
    <property type="resolution" value="3.20 A"/>
    <property type="chains" value="Q0/q0=77-128"/>
</dbReference>
<dbReference type="PDB" id="4U52">
    <property type="method" value="X-ray"/>
    <property type="resolution" value="3.00 A"/>
    <property type="chains" value="Q0/q0=77-128"/>
</dbReference>
<dbReference type="PDB" id="4U53">
    <property type="method" value="X-ray"/>
    <property type="resolution" value="3.30 A"/>
    <property type="chains" value="Q0/q0=77-128"/>
</dbReference>
<dbReference type="PDB" id="4U55">
    <property type="method" value="X-ray"/>
    <property type="resolution" value="3.20 A"/>
    <property type="chains" value="Q0/q0=77-128"/>
</dbReference>
<dbReference type="PDB" id="4U56">
    <property type="method" value="X-ray"/>
    <property type="resolution" value="3.45 A"/>
    <property type="chains" value="Q0/q0=77-128"/>
</dbReference>
<dbReference type="PDB" id="4U6F">
    <property type="method" value="X-ray"/>
    <property type="resolution" value="3.10 A"/>
    <property type="chains" value="Q0/q0=77-128"/>
</dbReference>
<dbReference type="PDB" id="4V6I">
    <property type="method" value="EM"/>
    <property type="resolution" value="8.80 A"/>
    <property type="chains" value="Bp=77-128"/>
</dbReference>
<dbReference type="PDB" id="4V88">
    <property type="method" value="X-ray"/>
    <property type="resolution" value="3.00 A"/>
    <property type="chains" value="Bm/Dm=1-128"/>
</dbReference>
<dbReference type="PDB" id="4V8T">
    <property type="method" value="EM"/>
    <property type="resolution" value="8.10 A"/>
    <property type="chains" value="m=1-128"/>
</dbReference>
<dbReference type="PDB" id="4V8Y">
    <property type="method" value="EM"/>
    <property type="resolution" value="4.30 A"/>
    <property type="chains" value="Bm=1-128"/>
</dbReference>
<dbReference type="PDB" id="4V8Z">
    <property type="method" value="EM"/>
    <property type="resolution" value="6.60 A"/>
    <property type="chains" value="Bm=1-128"/>
</dbReference>
<dbReference type="PDB" id="5APN">
    <property type="method" value="EM"/>
    <property type="resolution" value="3.91 A"/>
    <property type="chains" value="m=1-128"/>
</dbReference>
<dbReference type="PDB" id="5APO">
    <property type="method" value="EM"/>
    <property type="resolution" value="3.41 A"/>
    <property type="chains" value="m=1-128"/>
</dbReference>
<dbReference type="PDB" id="5DAT">
    <property type="method" value="X-ray"/>
    <property type="resolution" value="3.15 A"/>
    <property type="chains" value="Q0/q0=77-128"/>
</dbReference>
<dbReference type="PDB" id="5DC3">
    <property type="method" value="X-ray"/>
    <property type="resolution" value="3.25 A"/>
    <property type="chains" value="Q0/q0=77-128"/>
</dbReference>
<dbReference type="PDB" id="5DGE">
    <property type="method" value="X-ray"/>
    <property type="resolution" value="3.45 A"/>
    <property type="chains" value="Q0/q0=77-128"/>
</dbReference>
<dbReference type="PDB" id="5DGF">
    <property type="method" value="X-ray"/>
    <property type="resolution" value="3.30 A"/>
    <property type="chains" value="Q0/q0=77-128"/>
</dbReference>
<dbReference type="PDB" id="5DGV">
    <property type="method" value="X-ray"/>
    <property type="resolution" value="3.10 A"/>
    <property type="chains" value="Q0/q0=77-128"/>
</dbReference>
<dbReference type="PDB" id="5FCI">
    <property type="method" value="X-ray"/>
    <property type="resolution" value="3.40 A"/>
    <property type="chains" value="Q0/q0=77-128"/>
</dbReference>
<dbReference type="PDB" id="5FCJ">
    <property type="method" value="X-ray"/>
    <property type="resolution" value="3.10 A"/>
    <property type="chains" value="Q0/q0=77-128"/>
</dbReference>
<dbReference type="PDB" id="5GAK">
    <property type="method" value="EM"/>
    <property type="resolution" value="3.88 A"/>
    <property type="chains" value="o=1-128"/>
</dbReference>
<dbReference type="PDB" id="5I4L">
    <property type="method" value="X-ray"/>
    <property type="resolution" value="3.10 A"/>
    <property type="chains" value="Q0/q0=77-128"/>
</dbReference>
<dbReference type="PDB" id="5JUO">
    <property type="method" value="EM"/>
    <property type="resolution" value="4.00 A"/>
    <property type="chains" value="RA=1-128"/>
</dbReference>
<dbReference type="PDB" id="5JUP">
    <property type="method" value="EM"/>
    <property type="resolution" value="3.50 A"/>
    <property type="chains" value="RA=1-128"/>
</dbReference>
<dbReference type="PDB" id="5JUS">
    <property type="method" value="EM"/>
    <property type="resolution" value="4.20 A"/>
    <property type="chains" value="RA=1-128"/>
</dbReference>
<dbReference type="PDB" id="5JUT">
    <property type="method" value="EM"/>
    <property type="resolution" value="4.00 A"/>
    <property type="chains" value="RA=1-128"/>
</dbReference>
<dbReference type="PDB" id="5JUU">
    <property type="method" value="EM"/>
    <property type="resolution" value="4.00 A"/>
    <property type="chains" value="RA=1-128"/>
</dbReference>
<dbReference type="PDB" id="5LYB">
    <property type="method" value="X-ray"/>
    <property type="resolution" value="3.25 A"/>
    <property type="chains" value="Q0/q0=77-128"/>
</dbReference>
<dbReference type="PDB" id="5M1J">
    <property type="method" value="EM"/>
    <property type="resolution" value="3.30 A"/>
    <property type="chains" value="m5=77-128"/>
</dbReference>
<dbReference type="PDB" id="5MC6">
    <property type="method" value="EM"/>
    <property type="resolution" value="3.80 A"/>
    <property type="chains" value="AO=1-128"/>
</dbReference>
<dbReference type="PDB" id="5MEI">
    <property type="method" value="X-ray"/>
    <property type="resolution" value="3.50 A"/>
    <property type="chains" value="AN/DO=77-128"/>
</dbReference>
<dbReference type="PDB" id="5NDG">
    <property type="method" value="X-ray"/>
    <property type="resolution" value="3.70 A"/>
    <property type="chains" value="Q0/q0=77-128"/>
</dbReference>
<dbReference type="PDB" id="5NDV">
    <property type="method" value="X-ray"/>
    <property type="resolution" value="3.30 A"/>
    <property type="chains" value="Q0/q0=77-128"/>
</dbReference>
<dbReference type="PDB" id="5NDW">
    <property type="method" value="X-ray"/>
    <property type="resolution" value="3.70 A"/>
    <property type="chains" value="Q0/q0=77-128"/>
</dbReference>
<dbReference type="PDB" id="5OBM">
    <property type="method" value="X-ray"/>
    <property type="resolution" value="3.40 A"/>
    <property type="chains" value="Q0/q0=77-128"/>
</dbReference>
<dbReference type="PDB" id="5ON6">
    <property type="method" value="X-ray"/>
    <property type="resolution" value="3.10 A"/>
    <property type="chains" value="AN/DO=77-128"/>
</dbReference>
<dbReference type="PDB" id="5T62">
    <property type="method" value="EM"/>
    <property type="resolution" value="3.30 A"/>
    <property type="chains" value="z=1-128"/>
</dbReference>
<dbReference type="PDB" id="5T6R">
    <property type="method" value="EM"/>
    <property type="resolution" value="4.50 A"/>
    <property type="chains" value="z=1-128"/>
</dbReference>
<dbReference type="PDB" id="5TBW">
    <property type="method" value="X-ray"/>
    <property type="resolution" value="3.00 A"/>
    <property type="chains" value="AN/DO=77-128"/>
</dbReference>
<dbReference type="PDB" id="5TGA">
    <property type="method" value="X-ray"/>
    <property type="resolution" value="3.30 A"/>
    <property type="chains" value="Q0/q0=77-128"/>
</dbReference>
<dbReference type="PDB" id="5TGM">
    <property type="method" value="X-ray"/>
    <property type="resolution" value="3.50 A"/>
    <property type="chains" value="Q0/q0=77-128"/>
</dbReference>
<dbReference type="PDB" id="6EF3">
    <property type="method" value="EM"/>
    <property type="resolution" value="4.17 A"/>
    <property type="chains" value="u=1-128"/>
</dbReference>
<dbReference type="PDB" id="6GQ1">
    <property type="method" value="EM"/>
    <property type="resolution" value="4.40 A"/>
    <property type="chains" value="m=77-128"/>
</dbReference>
<dbReference type="PDB" id="6GQB">
    <property type="method" value="EM"/>
    <property type="resolution" value="3.90 A"/>
    <property type="chains" value="m=77-128"/>
</dbReference>
<dbReference type="PDB" id="6GQV">
    <property type="method" value="EM"/>
    <property type="resolution" value="4.00 A"/>
    <property type="chains" value="m=77-128"/>
</dbReference>
<dbReference type="PDB" id="6HD7">
    <property type="method" value="EM"/>
    <property type="resolution" value="3.40 A"/>
    <property type="chains" value="o=1-128"/>
</dbReference>
<dbReference type="PDB" id="6HHQ">
    <property type="method" value="X-ray"/>
    <property type="resolution" value="3.10 A"/>
    <property type="chains" value="AN/DO=1-128"/>
</dbReference>
<dbReference type="PDB" id="6I7O">
    <property type="method" value="EM"/>
    <property type="resolution" value="5.30 A"/>
    <property type="chains" value="AO/XO=77-128"/>
</dbReference>
<dbReference type="PDB" id="6N8M">
    <property type="method" value="EM"/>
    <property type="resolution" value="3.50 A"/>
    <property type="chains" value="z=1-128"/>
</dbReference>
<dbReference type="PDB" id="6N8N">
    <property type="method" value="EM"/>
    <property type="resolution" value="3.80 A"/>
    <property type="chains" value="z=1-128"/>
</dbReference>
<dbReference type="PDB" id="6N8O">
    <property type="method" value="EM"/>
    <property type="resolution" value="3.50 A"/>
    <property type="chains" value="z=1-128"/>
</dbReference>
<dbReference type="PDB" id="6NYO">
    <property type="method" value="X-ray"/>
    <property type="resolution" value="1.50 A"/>
    <property type="chains" value="E=1-76"/>
</dbReference>
<dbReference type="PDB" id="6OA9">
    <property type="method" value="EM"/>
    <property type="resolution" value="3.90 A"/>
    <property type="chains" value="H/J/K=1-76"/>
</dbReference>
<dbReference type="PDB" id="6OAA">
    <property type="method" value="EM"/>
    <property type="resolution" value="4.10 A"/>
    <property type="chains" value="H=1-76"/>
</dbReference>
<dbReference type="PDB" id="6OIG">
    <property type="method" value="EM"/>
    <property type="resolution" value="3.80 A"/>
    <property type="chains" value="m=77-128"/>
</dbReference>
<dbReference type="PDB" id="6Q8Y">
    <property type="method" value="EM"/>
    <property type="resolution" value="3.10 A"/>
    <property type="chains" value="AO=77-128"/>
</dbReference>
<dbReference type="PDB" id="6QIK">
    <property type="method" value="EM"/>
    <property type="resolution" value="3.10 A"/>
    <property type="chains" value="t=1-128"/>
</dbReference>
<dbReference type="PDB" id="6QT0">
    <property type="method" value="EM"/>
    <property type="resolution" value="3.40 A"/>
    <property type="chains" value="t=1-128"/>
</dbReference>
<dbReference type="PDB" id="6QTZ">
    <property type="method" value="EM"/>
    <property type="resolution" value="3.50 A"/>
    <property type="chains" value="t=1-128"/>
</dbReference>
<dbReference type="PDB" id="6R84">
    <property type="method" value="EM"/>
    <property type="resolution" value="3.60 A"/>
    <property type="chains" value="o=77-128"/>
</dbReference>
<dbReference type="PDB" id="6R86">
    <property type="method" value="EM"/>
    <property type="resolution" value="3.40 A"/>
    <property type="chains" value="o=77-128"/>
</dbReference>
<dbReference type="PDB" id="6R87">
    <property type="method" value="EM"/>
    <property type="resolution" value="3.40 A"/>
    <property type="chains" value="o=77-128"/>
</dbReference>
<dbReference type="PDB" id="6RI5">
    <property type="method" value="EM"/>
    <property type="resolution" value="3.30 A"/>
    <property type="chains" value="t=1-128"/>
</dbReference>
<dbReference type="PDB" id="6S47">
    <property type="method" value="EM"/>
    <property type="resolution" value="3.28 A"/>
    <property type="chains" value="Ao=2-128"/>
</dbReference>
<dbReference type="PDB" id="6SNT">
    <property type="method" value="EM"/>
    <property type="resolution" value="2.80 A"/>
    <property type="chains" value="ad=1-128"/>
</dbReference>
<dbReference type="PDB" id="6SV4">
    <property type="method" value="EM"/>
    <property type="resolution" value="3.30 A"/>
    <property type="chains" value="AO/XO/zO=1-128"/>
</dbReference>
<dbReference type="PDB" id="6T4Q">
    <property type="method" value="EM"/>
    <property type="resolution" value="2.60 A"/>
    <property type="chains" value="Lm=77-128"/>
</dbReference>
<dbReference type="PDB" id="6T7I">
    <property type="method" value="EM"/>
    <property type="resolution" value="3.20 A"/>
    <property type="chains" value="Lm=1-128"/>
</dbReference>
<dbReference type="PDB" id="6T7T">
    <property type="method" value="EM"/>
    <property type="resolution" value="3.10 A"/>
    <property type="chains" value="Lm=1-128"/>
</dbReference>
<dbReference type="PDB" id="6T83">
    <property type="method" value="EM"/>
    <property type="resolution" value="4.00 A"/>
    <property type="chains" value="X/mb=1-128"/>
</dbReference>
<dbReference type="PDB" id="6TB3">
    <property type="method" value="EM"/>
    <property type="resolution" value="2.80 A"/>
    <property type="chains" value="AO=77-128"/>
</dbReference>
<dbReference type="PDB" id="6TNU">
    <property type="method" value="EM"/>
    <property type="resolution" value="3.10 A"/>
    <property type="chains" value="AO=77-128"/>
</dbReference>
<dbReference type="PDB" id="6WOO">
    <property type="method" value="EM"/>
    <property type="resolution" value="2.90 A"/>
    <property type="chains" value="m=78-128"/>
</dbReference>
<dbReference type="PDB" id="6XIQ">
    <property type="method" value="EM"/>
    <property type="resolution" value="4.20 A"/>
    <property type="chains" value="m=1-128"/>
</dbReference>
<dbReference type="PDB" id="6Z6J">
    <property type="method" value="EM"/>
    <property type="resolution" value="3.40 A"/>
    <property type="chains" value="Lm=1-128"/>
</dbReference>
<dbReference type="PDB" id="6Z6K">
    <property type="method" value="EM"/>
    <property type="resolution" value="3.40 A"/>
    <property type="chains" value="Lm=1-128"/>
</dbReference>
<dbReference type="PDB" id="7AZY">
    <property type="method" value="EM"/>
    <property type="resolution" value="2.88 A"/>
    <property type="chains" value="P=1-128"/>
</dbReference>
<dbReference type="PDB" id="7B7D">
    <property type="method" value="EM"/>
    <property type="resolution" value="3.30 A"/>
    <property type="chains" value="Li=77-128"/>
</dbReference>
<dbReference type="PDB" id="7MPI">
    <property type="method" value="EM"/>
    <property type="resolution" value="3.05 A"/>
    <property type="chains" value="Am=77-128"/>
</dbReference>
<dbReference type="PDB" id="7MPJ">
    <property type="method" value="EM"/>
    <property type="resolution" value="2.70 A"/>
    <property type="chains" value="Am=77-128"/>
</dbReference>
<dbReference type="PDB" id="7N8B">
    <property type="method" value="EM"/>
    <property type="resolution" value="3.05 A"/>
    <property type="chains" value="Am=77-128"/>
</dbReference>
<dbReference type="PDB" id="7NRC">
    <property type="method" value="EM"/>
    <property type="resolution" value="3.90 A"/>
    <property type="chains" value="Lo=77-128"/>
</dbReference>
<dbReference type="PDB" id="7NRD">
    <property type="method" value="EM"/>
    <property type="resolution" value="4.36 A"/>
    <property type="chains" value="Lo=77-128"/>
</dbReference>
<dbReference type="PDB" id="7TOO">
    <property type="method" value="EM"/>
    <property type="resolution" value="2.70 A"/>
    <property type="chains" value="AL40=1-128"/>
</dbReference>
<dbReference type="PDB" id="7TOP">
    <property type="method" value="EM"/>
    <property type="resolution" value="2.40 A"/>
    <property type="chains" value="AL40=1-128"/>
</dbReference>
<dbReference type="PDB" id="7ZPQ">
    <property type="method" value="EM"/>
    <property type="resolution" value="3.47 A"/>
    <property type="chains" value="Bl=77-128"/>
</dbReference>
<dbReference type="PDB" id="7ZRS">
    <property type="method" value="EM"/>
    <property type="resolution" value="4.80 A"/>
    <property type="chains" value="Bl=77-128"/>
</dbReference>
<dbReference type="PDB" id="7ZS5">
    <property type="method" value="EM"/>
    <property type="resolution" value="3.20 A"/>
    <property type="chains" value="Bn=77-128"/>
</dbReference>
<dbReference type="PDB" id="7ZUW">
    <property type="method" value="EM"/>
    <property type="resolution" value="4.30 A"/>
    <property type="chains" value="Bl=77-128"/>
</dbReference>
<dbReference type="PDB" id="7ZUX">
    <property type="method" value="EM"/>
    <property type="resolution" value="2.50 A"/>
    <property type="chains" value="El=77-128"/>
</dbReference>
<dbReference type="PDB" id="7ZW0">
    <property type="method" value="EM"/>
    <property type="resolution" value="2.40 A"/>
    <property type="chains" value="Lp=77-128"/>
</dbReference>
<dbReference type="PDB" id="8AAF">
    <property type="method" value="EM"/>
    <property type="resolution" value="2.50 A"/>
    <property type="chains" value="Z=1-128"/>
</dbReference>
<dbReference type="PDB" id="8AGT">
    <property type="method" value="EM"/>
    <property type="resolution" value="2.60 A"/>
    <property type="chains" value="Z=1-128"/>
</dbReference>
<dbReference type="PDB" id="8AGU">
    <property type="method" value="EM"/>
    <property type="resolution" value="2.70 A"/>
    <property type="chains" value="Z=1-128"/>
</dbReference>
<dbReference type="PDB" id="8AGV">
    <property type="method" value="EM"/>
    <property type="resolution" value="2.60 A"/>
    <property type="chains" value="Z=1-128"/>
</dbReference>
<dbReference type="PDB" id="8AGW">
    <property type="method" value="EM"/>
    <property type="resolution" value="2.60 A"/>
    <property type="chains" value="Z=1-128"/>
</dbReference>
<dbReference type="PDB" id="8AGX">
    <property type="method" value="EM"/>
    <property type="resolution" value="2.40 A"/>
    <property type="chains" value="Z=1-128"/>
</dbReference>
<dbReference type="PDB" id="8AGZ">
    <property type="method" value="EM"/>
    <property type="resolution" value="2.60 A"/>
    <property type="chains" value="Z=1-128"/>
</dbReference>
<dbReference type="PDB" id="8BIP">
    <property type="method" value="EM"/>
    <property type="resolution" value="3.10 A"/>
    <property type="chains" value="Lm=77-128"/>
</dbReference>
<dbReference type="PDB" id="8BJQ">
    <property type="method" value="EM"/>
    <property type="resolution" value="3.80 A"/>
    <property type="chains" value="Lm=77-128"/>
</dbReference>
<dbReference type="PDB" id="8BN3">
    <property type="method" value="EM"/>
    <property type="resolution" value="2.40 A"/>
    <property type="chains" value="Q0=77-128"/>
</dbReference>
<dbReference type="PDB" id="8BQD">
    <property type="method" value="EM"/>
    <property type="resolution" value="3.90 A"/>
    <property type="chains" value="AO=77-128"/>
</dbReference>
<dbReference type="PDB" id="8BQX">
    <property type="method" value="EM"/>
    <property type="resolution" value="3.80 A"/>
    <property type="chains" value="AO=77-128"/>
</dbReference>
<dbReference type="PDB" id="8CAH">
    <property type="method" value="EM"/>
    <property type="resolution" value="3.00 A"/>
    <property type="chains" value="k=1-76"/>
</dbReference>
<dbReference type="PDB" id="8CAS">
    <property type="method" value="EM"/>
    <property type="resolution" value="3.30 A"/>
    <property type="chains" value="y=1-76"/>
</dbReference>
<dbReference type="PDB" id="8CCS">
    <property type="method" value="EM"/>
    <property type="resolution" value="1.97 A"/>
    <property type="chains" value="Y=1-128"/>
</dbReference>
<dbReference type="PDB" id="8CDL">
    <property type="method" value="EM"/>
    <property type="resolution" value="2.72 A"/>
    <property type="chains" value="Y=1-128"/>
</dbReference>
<dbReference type="PDB" id="8CDR">
    <property type="method" value="EM"/>
    <property type="resolution" value="2.04 A"/>
    <property type="chains" value="Y=1-128"/>
</dbReference>
<dbReference type="PDB" id="8CEH">
    <property type="method" value="EM"/>
    <property type="resolution" value="2.05 A"/>
    <property type="chains" value="Y=1-128"/>
</dbReference>
<dbReference type="PDB" id="8CF5">
    <property type="method" value="EM"/>
    <property type="resolution" value="2.71 A"/>
    <property type="chains" value="Y=1-128"/>
</dbReference>
<dbReference type="PDB" id="8CG8">
    <property type="method" value="EM"/>
    <property type="resolution" value="2.57 A"/>
    <property type="chains" value="Y=1-128"/>
</dbReference>
<dbReference type="PDB" id="8CGN">
    <property type="method" value="EM"/>
    <property type="resolution" value="2.28 A"/>
    <property type="chains" value="Y=1-128"/>
</dbReference>
<dbReference type="PDB" id="8CIV">
    <property type="method" value="EM"/>
    <property type="resolution" value="2.47 A"/>
    <property type="chains" value="Y=1-128"/>
</dbReference>
<dbReference type="PDB" id="8CKU">
    <property type="method" value="EM"/>
    <property type="resolution" value="3.11 A"/>
    <property type="chains" value="Y=1-128"/>
</dbReference>
<dbReference type="PDB" id="8CMJ">
    <property type="method" value="EM"/>
    <property type="resolution" value="3.79 A"/>
    <property type="chains" value="Y=1-128"/>
</dbReference>
<dbReference type="PDB" id="8DAS">
    <property type="method" value="EM"/>
    <property type="resolution" value="3.50 A"/>
    <property type="chains" value="J/K=1-76"/>
</dbReference>
<dbReference type="PDB" id="8EUB">
    <property type="method" value="EM"/>
    <property type="resolution" value="2.52 A"/>
    <property type="chains" value="Am=1-128"/>
</dbReference>
<dbReference type="PDB" id="8EVP">
    <property type="method" value="EM"/>
    <property type="resolution" value="2.38 A"/>
    <property type="chains" value="Am=1-128"/>
</dbReference>
<dbReference type="PDB" id="8EVQ">
    <property type="method" value="EM"/>
    <property type="resolution" value="2.72 A"/>
    <property type="chains" value="Am=1-128"/>
</dbReference>
<dbReference type="PDB" id="8EVR">
    <property type="method" value="EM"/>
    <property type="resolution" value="2.87 A"/>
    <property type="chains" value="Am=1-128"/>
</dbReference>
<dbReference type="PDB" id="8EVS">
    <property type="method" value="EM"/>
    <property type="resolution" value="2.62 A"/>
    <property type="chains" value="Am=1-128"/>
</dbReference>
<dbReference type="PDB" id="8EVT">
    <property type="method" value="EM"/>
    <property type="resolution" value="2.20 A"/>
    <property type="chains" value="Am=1-128"/>
</dbReference>
<dbReference type="PDB" id="8EWB">
    <property type="method" value="EM"/>
    <property type="resolution" value="2.87 A"/>
    <property type="chains" value="Am=1-128"/>
</dbReference>
<dbReference type="PDB" id="8EWC">
    <property type="method" value="EM"/>
    <property type="resolution" value="2.45 A"/>
    <property type="chains" value="Am=1-128"/>
</dbReference>
<dbReference type="PDB" id="8HTD">
    <property type="method" value="X-ray"/>
    <property type="resolution" value="1.85 A"/>
    <property type="chains" value="B=1-76"/>
</dbReference>
<dbReference type="PDB" id="8HTE">
    <property type="method" value="X-ray"/>
    <property type="resolution" value="2.31 A"/>
    <property type="chains" value="B=1-76"/>
</dbReference>
<dbReference type="PDB" id="8K2D">
    <property type="method" value="EM"/>
    <property type="resolution" value="3.20 A"/>
    <property type="chains" value="Lm=1-128"/>
</dbReference>
<dbReference type="PDB" id="8K82">
    <property type="method" value="EM"/>
    <property type="resolution" value="3.00 A"/>
    <property type="chains" value="Lm=1-128"/>
</dbReference>
<dbReference type="PDB" id="8P4V">
    <property type="method" value="X-ray"/>
    <property type="resolution" value="3.16 A"/>
    <property type="chains" value="AN/DO=1-128"/>
</dbReference>
<dbReference type="PDB" id="8P8M">
    <property type="method" value="EM"/>
    <property type="resolution" value="2.66 A"/>
    <property type="chains" value="RO=1-128"/>
</dbReference>
<dbReference type="PDB" id="8P8N">
    <property type="method" value="EM"/>
    <property type="resolution" value="2.15 A"/>
    <property type="chains" value="RO=1-128"/>
</dbReference>
<dbReference type="PDB" id="8P8U">
    <property type="method" value="EM"/>
    <property type="resolution" value="2.23 A"/>
    <property type="chains" value="RO=1-128"/>
</dbReference>
<dbReference type="PDB" id="8P9A">
    <property type="method" value="X-ray"/>
    <property type="resolution" value="2.90 A"/>
    <property type="chains" value="AN/DO=1-128"/>
</dbReference>
<dbReference type="PDB" id="8PFR">
    <property type="method" value="EM"/>
    <property type="resolution" value="2.15 A"/>
    <property type="chains" value="RO=1-128"/>
</dbReference>
<dbReference type="PDB" id="8T2X">
    <property type="method" value="EM"/>
    <property type="resolution" value="2.46 A"/>
    <property type="chains" value="Am=1-128"/>
</dbReference>
<dbReference type="PDB" id="8T2Y">
    <property type="method" value="EM"/>
    <property type="resolution" value="2.20 A"/>
    <property type="chains" value="Am=1-128"/>
</dbReference>
<dbReference type="PDB" id="8T2Z">
    <property type="method" value="EM"/>
    <property type="resolution" value="2.40 A"/>
    <property type="chains" value="Am=1-128"/>
</dbReference>
<dbReference type="PDB" id="8T30">
    <property type="method" value="EM"/>
    <property type="resolution" value="2.88 A"/>
    <property type="chains" value="Am=1-128"/>
</dbReference>
<dbReference type="PDB" id="8T3A">
    <property type="method" value="EM"/>
    <property type="resolution" value="2.86 A"/>
    <property type="chains" value="Am=1-128"/>
</dbReference>
<dbReference type="PDB" id="8T3B">
    <property type="method" value="EM"/>
    <property type="resolution" value="3.08 A"/>
    <property type="chains" value="Am=1-128"/>
</dbReference>
<dbReference type="PDB" id="8T3C">
    <property type="method" value="EM"/>
    <property type="resolution" value="3.86 A"/>
    <property type="chains" value="Am=1-128"/>
</dbReference>
<dbReference type="PDB" id="8T3D">
    <property type="method" value="EM"/>
    <property type="resolution" value="2.95 A"/>
    <property type="chains" value="Am=1-128"/>
</dbReference>
<dbReference type="PDB" id="8T3E">
    <property type="method" value="EM"/>
    <property type="resolution" value="3.04 A"/>
    <property type="chains" value="Am=1-128"/>
</dbReference>
<dbReference type="PDB" id="8T3F">
    <property type="method" value="EM"/>
    <property type="resolution" value="3.09 A"/>
    <property type="chains" value="Am=1-128"/>
</dbReference>
<dbReference type="PDB" id="8UT0">
    <property type="method" value="EM"/>
    <property type="resolution" value="3.22 A"/>
    <property type="chains" value="Lo=77-128"/>
</dbReference>
<dbReference type="PDB" id="8UTI">
    <property type="method" value="EM"/>
    <property type="resolution" value="3.13 A"/>
    <property type="chains" value="Lo=77-128"/>
</dbReference>
<dbReference type="PDB" id="8XU8">
    <property type="method" value="EM"/>
    <property type="resolution" value="3.40 A"/>
    <property type="chains" value="o=77-128"/>
</dbReference>
<dbReference type="PDB" id="8Y0U">
    <property type="method" value="EM"/>
    <property type="resolution" value="3.59 A"/>
    <property type="chains" value="Lm=1-128"/>
</dbReference>
<dbReference type="PDB" id="8YLD">
    <property type="method" value="EM"/>
    <property type="resolution" value="3.90 A"/>
    <property type="chains" value="o=77-128"/>
</dbReference>
<dbReference type="PDB" id="8YLR">
    <property type="method" value="EM"/>
    <property type="resolution" value="3.90 A"/>
    <property type="chains" value="o=77-128"/>
</dbReference>
<dbReference type="PDB" id="8Z70">
    <property type="method" value="EM"/>
    <property type="resolution" value="3.20 A"/>
    <property type="chains" value="o=77-128"/>
</dbReference>
<dbReference type="PDB" id="8Z71">
    <property type="method" value="EM"/>
    <property type="resolution" value="3.60 A"/>
    <property type="chains" value="o=77-128"/>
</dbReference>
<dbReference type="PDB" id="9F9S">
    <property type="method" value="EM"/>
    <property type="resolution" value="2.90 A"/>
    <property type="chains" value="Le/Me=1-128"/>
</dbReference>
<dbReference type="PDBsum" id="3J6X"/>
<dbReference type="PDBsum" id="3J6Y"/>
<dbReference type="PDBsum" id="3J77"/>
<dbReference type="PDBsum" id="3J78"/>
<dbReference type="PDBsum" id="4U3M"/>
<dbReference type="PDBsum" id="4U3N"/>
<dbReference type="PDBsum" id="4U3U"/>
<dbReference type="PDBsum" id="4U4N"/>
<dbReference type="PDBsum" id="4U4O"/>
<dbReference type="PDBsum" id="4U4Q"/>
<dbReference type="PDBsum" id="4U4R"/>
<dbReference type="PDBsum" id="4U4U"/>
<dbReference type="PDBsum" id="4U4Y"/>
<dbReference type="PDBsum" id="4U4Z"/>
<dbReference type="PDBsum" id="4U50"/>
<dbReference type="PDBsum" id="4U51"/>
<dbReference type="PDBsum" id="4U52"/>
<dbReference type="PDBsum" id="4U53"/>
<dbReference type="PDBsum" id="4U55"/>
<dbReference type="PDBsum" id="4U56"/>
<dbReference type="PDBsum" id="4U6F"/>
<dbReference type="PDBsum" id="4V6I"/>
<dbReference type="PDBsum" id="4V88"/>
<dbReference type="PDBsum" id="4V8T"/>
<dbReference type="PDBsum" id="4V8Y"/>
<dbReference type="PDBsum" id="4V8Z"/>
<dbReference type="PDBsum" id="5APN"/>
<dbReference type="PDBsum" id="5APO"/>
<dbReference type="PDBsum" id="5DAT"/>
<dbReference type="PDBsum" id="5DC3"/>
<dbReference type="PDBsum" id="5DGE"/>
<dbReference type="PDBsum" id="5DGF"/>
<dbReference type="PDBsum" id="5DGV"/>
<dbReference type="PDBsum" id="5FCI"/>
<dbReference type="PDBsum" id="5FCJ"/>
<dbReference type="PDBsum" id="5GAK"/>
<dbReference type="PDBsum" id="5I4L"/>
<dbReference type="PDBsum" id="5JUO"/>
<dbReference type="PDBsum" id="5JUP"/>
<dbReference type="PDBsum" id="5JUS"/>
<dbReference type="PDBsum" id="5JUT"/>
<dbReference type="PDBsum" id="5JUU"/>
<dbReference type="PDBsum" id="5LYB"/>
<dbReference type="PDBsum" id="5M1J"/>
<dbReference type="PDBsum" id="5MC6"/>
<dbReference type="PDBsum" id="5MEI"/>
<dbReference type="PDBsum" id="5NDG"/>
<dbReference type="PDBsum" id="5NDV"/>
<dbReference type="PDBsum" id="5NDW"/>
<dbReference type="PDBsum" id="5OBM"/>
<dbReference type="PDBsum" id="5ON6"/>
<dbReference type="PDBsum" id="5T62"/>
<dbReference type="PDBsum" id="5T6R"/>
<dbReference type="PDBsum" id="5TBW"/>
<dbReference type="PDBsum" id="5TGA"/>
<dbReference type="PDBsum" id="5TGM"/>
<dbReference type="PDBsum" id="6EF3"/>
<dbReference type="PDBsum" id="6GQ1"/>
<dbReference type="PDBsum" id="6GQB"/>
<dbReference type="PDBsum" id="6GQV"/>
<dbReference type="PDBsum" id="6HD7"/>
<dbReference type="PDBsum" id="6HHQ"/>
<dbReference type="PDBsum" id="6I7O"/>
<dbReference type="PDBsum" id="6N8M"/>
<dbReference type="PDBsum" id="6N8N"/>
<dbReference type="PDBsum" id="6N8O"/>
<dbReference type="PDBsum" id="6NYO"/>
<dbReference type="PDBsum" id="6OA9"/>
<dbReference type="PDBsum" id="6OAA"/>
<dbReference type="PDBsum" id="6OIG"/>
<dbReference type="PDBsum" id="6Q8Y"/>
<dbReference type="PDBsum" id="6QIK"/>
<dbReference type="PDBsum" id="6QT0"/>
<dbReference type="PDBsum" id="6QTZ"/>
<dbReference type="PDBsum" id="6R84"/>
<dbReference type="PDBsum" id="6R86"/>
<dbReference type="PDBsum" id="6R87"/>
<dbReference type="PDBsum" id="6RI5"/>
<dbReference type="PDBsum" id="6S47"/>
<dbReference type="PDBsum" id="6SNT"/>
<dbReference type="PDBsum" id="6SV4"/>
<dbReference type="PDBsum" id="6T4Q"/>
<dbReference type="PDBsum" id="6T7I"/>
<dbReference type="PDBsum" id="6T7T"/>
<dbReference type="PDBsum" id="6T83"/>
<dbReference type="PDBsum" id="6TB3"/>
<dbReference type="PDBsum" id="6TNU"/>
<dbReference type="PDBsum" id="6WOO"/>
<dbReference type="PDBsum" id="6XIQ"/>
<dbReference type="PDBsum" id="6Z6J"/>
<dbReference type="PDBsum" id="6Z6K"/>
<dbReference type="PDBsum" id="7AZY"/>
<dbReference type="PDBsum" id="7B7D"/>
<dbReference type="PDBsum" id="7MPI"/>
<dbReference type="PDBsum" id="7MPJ"/>
<dbReference type="PDBsum" id="7N8B"/>
<dbReference type="PDBsum" id="7NRC"/>
<dbReference type="PDBsum" id="7NRD"/>
<dbReference type="PDBsum" id="7TOO"/>
<dbReference type="PDBsum" id="7TOP"/>
<dbReference type="PDBsum" id="7ZPQ"/>
<dbReference type="PDBsum" id="7ZRS"/>
<dbReference type="PDBsum" id="7ZS5"/>
<dbReference type="PDBsum" id="7ZUW"/>
<dbReference type="PDBsum" id="7ZUX"/>
<dbReference type="PDBsum" id="7ZW0"/>
<dbReference type="PDBsum" id="8AAF"/>
<dbReference type="PDBsum" id="8AGT"/>
<dbReference type="PDBsum" id="8AGU"/>
<dbReference type="PDBsum" id="8AGV"/>
<dbReference type="PDBsum" id="8AGW"/>
<dbReference type="PDBsum" id="8AGX"/>
<dbReference type="PDBsum" id="8AGZ"/>
<dbReference type="PDBsum" id="8BIP"/>
<dbReference type="PDBsum" id="8BJQ"/>
<dbReference type="PDBsum" id="8BN3"/>
<dbReference type="PDBsum" id="8BQD"/>
<dbReference type="PDBsum" id="8BQX"/>
<dbReference type="PDBsum" id="8CAH"/>
<dbReference type="PDBsum" id="8CAS"/>
<dbReference type="PDBsum" id="8CCS"/>
<dbReference type="PDBsum" id="8CDL"/>
<dbReference type="PDBsum" id="8CDR"/>
<dbReference type="PDBsum" id="8CEH"/>
<dbReference type="PDBsum" id="8CF5"/>
<dbReference type="PDBsum" id="8CG8"/>
<dbReference type="PDBsum" id="8CGN"/>
<dbReference type="PDBsum" id="8CIV"/>
<dbReference type="PDBsum" id="8CKU"/>
<dbReference type="PDBsum" id="8CMJ"/>
<dbReference type="PDBsum" id="8DAS"/>
<dbReference type="PDBsum" id="8EUB"/>
<dbReference type="PDBsum" id="8EVP"/>
<dbReference type="PDBsum" id="8EVQ"/>
<dbReference type="PDBsum" id="8EVR"/>
<dbReference type="PDBsum" id="8EVS"/>
<dbReference type="PDBsum" id="8EVT"/>
<dbReference type="PDBsum" id="8EWB"/>
<dbReference type="PDBsum" id="8EWC"/>
<dbReference type="PDBsum" id="8HTD"/>
<dbReference type="PDBsum" id="8HTE"/>
<dbReference type="PDBsum" id="8K2D"/>
<dbReference type="PDBsum" id="8K82"/>
<dbReference type="PDBsum" id="8P4V"/>
<dbReference type="PDBsum" id="8P8M"/>
<dbReference type="PDBsum" id="8P8N"/>
<dbReference type="PDBsum" id="8P8U"/>
<dbReference type="PDBsum" id="8P9A"/>
<dbReference type="PDBsum" id="8PFR"/>
<dbReference type="PDBsum" id="8T2X"/>
<dbReference type="PDBsum" id="8T2Y"/>
<dbReference type="PDBsum" id="8T2Z"/>
<dbReference type="PDBsum" id="8T30"/>
<dbReference type="PDBsum" id="8T3A"/>
<dbReference type="PDBsum" id="8T3B"/>
<dbReference type="PDBsum" id="8T3C"/>
<dbReference type="PDBsum" id="8T3D"/>
<dbReference type="PDBsum" id="8T3E"/>
<dbReference type="PDBsum" id="8T3F"/>
<dbReference type="PDBsum" id="8UT0"/>
<dbReference type="PDBsum" id="8UTI"/>
<dbReference type="PDBsum" id="8XU8"/>
<dbReference type="PDBsum" id="8Y0U"/>
<dbReference type="PDBsum" id="8YLD"/>
<dbReference type="PDBsum" id="8YLR"/>
<dbReference type="PDBsum" id="8Z70"/>
<dbReference type="PDBsum" id="8Z71"/>
<dbReference type="PDBsum" id="9F9S"/>
<dbReference type="EMDB" id="EMD-0047"/>
<dbReference type="EMDB" id="EMD-0048"/>
<dbReference type="EMDB" id="EMD-0049"/>
<dbReference type="EMDB" id="EMD-0202"/>
<dbReference type="EMDB" id="EMD-0372"/>
<dbReference type="EMDB" id="EMD-0373"/>
<dbReference type="EMDB" id="EMD-0374"/>
<dbReference type="EMDB" id="EMD-0665"/>
<dbReference type="EMDB" id="EMD-0666"/>
<dbReference type="EMDB" id="EMD-10098"/>
<dbReference type="EMDB" id="EMD-10262"/>
<dbReference type="EMDB" id="EMD-10315"/>
<dbReference type="EMDB" id="EMD-10377"/>
<dbReference type="EMDB" id="EMD-10396"/>
<dbReference type="EMDB" id="EMD-10397"/>
<dbReference type="EMDB" id="EMD-10398"/>
<dbReference type="EMDB" id="EMD-10431"/>
<dbReference type="EMDB" id="EMD-10537"/>
<dbReference type="EMDB" id="EMD-11096"/>
<dbReference type="EMDB" id="EMD-11097"/>
<dbReference type="EMDB" id="EMD-11951"/>
<dbReference type="EMDB" id="EMD-12081"/>
<dbReference type="EMDB" id="EMD-12534"/>
<dbReference type="EMDB" id="EMD-12535"/>
<dbReference type="EMDB" id="EMD-14861"/>
<dbReference type="EMDB" id="EMD-14921"/>
<dbReference type="EMDB" id="EMD-14926"/>
<dbReference type="EMDB" id="EMD-14978"/>
<dbReference type="EMDB" id="EMD-14979"/>
<dbReference type="EMDB" id="EMD-14990"/>
<dbReference type="EMDB" id="EMD-15296"/>
<dbReference type="EMDB" id="EMD-15423"/>
<dbReference type="EMDB" id="EMD-15424"/>
<dbReference type="EMDB" id="EMD-15425"/>
<dbReference type="EMDB" id="EMD-15426"/>
<dbReference type="EMDB" id="EMD-15427"/>
<dbReference type="EMDB" id="EMD-15428"/>
<dbReference type="EMDB" id="EMD-16086"/>
<dbReference type="EMDB" id="EMD-16090"/>
<dbReference type="EMDB" id="EMD-16127"/>
<dbReference type="EMDB" id="EMD-16182"/>
<dbReference type="EMDB" id="EMD-16191"/>
<dbReference type="EMDB" id="EMD-16525"/>
<dbReference type="EMDB" id="EMD-16533"/>
<dbReference type="EMDB" id="EMD-16563"/>
<dbReference type="EMDB" id="EMD-16591"/>
<dbReference type="EMDB" id="EMD-16594"/>
<dbReference type="EMDB" id="EMD-16609"/>
<dbReference type="EMDB" id="EMD-16616"/>
<dbReference type="EMDB" id="EMD-16634"/>
<dbReference type="EMDB" id="EMD-16648"/>
<dbReference type="EMDB" id="EMD-16684"/>
<dbReference type="EMDB" id="EMD-16702"/>
<dbReference type="EMDB" id="EMD-16729"/>
<dbReference type="EMDB" id="EMD-17549"/>
<dbReference type="EMDB" id="EMD-17550"/>
<dbReference type="EMDB" id="EMD-17552"/>
<dbReference type="EMDB" id="EMD-17653"/>
<dbReference type="EMDB" id="EMD-20077"/>
<dbReference type="EMDB" id="EMD-21859"/>
<dbReference type="EMDB" id="EMD-22196"/>
<dbReference type="EMDB" id="EMD-23934"/>
<dbReference type="EMDB" id="EMD-23935"/>
<dbReference type="EMDB" id="EMD-24235"/>
<dbReference type="EMDB" id="EMD-26033"/>
<dbReference type="EMDB" id="EMD-26034"/>
<dbReference type="EMDB" id="EMD-27274"/>
<dbReference type="EMDB" id="EMD-28610"/>
<dbReference type="EMDB" id="EMD-28632"/>
<dbReference type="EMDB" id="EMD-28633"/>
<dbReference type="EMDB" id="EMD-28634"/>
<dbReference type="EMDB" id="EMD-28635"/>
<dbReference type="EMDB" id="EMD-28636"/>
<dbReference type="EMDB" id="EMD-28642"/>
<dbReference type="EMDB" id="EMD-28643"/>
<dbReference type="EMDB" id="EMD-3461"/>
<dbReference type="EMDB" id="EMD-36839"/>
<dbReference type="EMDB" id="EMD-36945"/>
<dbReference type="EMDB" id="EMD-38660"/>
<dbReference type="EMDB" id="EMD-40990"/>
<dbReference type="EMDB" id="EMD-40991"/>
<dbReference type="EMDB" id="EMD-40992"/>
<dbReference type="EMDB" id="EMD-40993"/>
<dbReference type="EMDB" id="EMD-40997"/>
<dbReference type="EMDB" id="EMD-40998"/>
<dbReference type="EMDB" id="EMD-40999"/>
<dbReference type="EMDB" id="EMD-41000"/>
<dbReference type="EMDB" id="EMD-41001"/>
<dbReference type="EMDB" id="EMD-41002"/>
<dbReference type="EMDB" id="EMD-4140"/>
<dbReference type="EMDB" id="EMD-42525"/>
<dbReference type="EMDB" id="EMD-42540"/>
<dbReference type="EMDB" id="EMD-4427"/>
<dbReference type="EMDB" id="EMD-4474"/>
<dbReference type="EMDB" id="EMD-4560"/>
<dbReference type="EMDB" id="EMD-4630"/>
<dbReference type="EMDB" id="EMD-4636"/>
<dbReference type="EMDB" id="EMD-4751"/>
<dbReference type="EMDB" id="EMD-4752"/>
<dbReference type="EMDB" id="EMD-4753"/>
<dbReference type="EMDB" id="EMD-4884"/>
<dbReference type="EMDB" id="EMD-50259"/>
<dbReference type="EMDB" id="EMD-8362"/>
<dbReference type="EMDB" id="EMD-8368"/>
<dbReference type="EMDB" id="EMD-9045"/>
<dbReference type="SMR" id="P0CH08"/>
<dbReference type="BioGRID" id="34225">
    <property type="interactions" value="399"/>
</dbReference>
<dbReference type="BioGRID" id="34844">
    <property type="interactions" value="223"/>
</dbReference>
<dbReference type="ComplexPortal" id="CPX-1601">
    <property type="entry name" value="60S cytosolic large ribosomal subunit"/>
</dbReference>
<dbReference type="FunCoup" id="P0CH08">
    <property type="interactions" value="1125"/>
</dbReference>
<dbReference type="IntAct" id="P0CH08">
    <property type="interactions" value="14"/>
</dbReference>
<dbReference type="STRING" id="4932.YIL148W"/>
<dbReference type="iPTMnet" id="P0CH08"/>
<dbReference type="PaxDb" id="4932-YIL148W"/>
<dbReference type="PeptideAtlas" id="P0CH08"/>
<dbReference type="EnsemblFungi" id="YIL148W_mRNA">
    <property type="protein sequence ID" value="YIL148W"/>
    <property type="gene ID" value="YIL148W"/>
</dbReference>
<dbReference type="EnsemblFungi" id="YKR094C_mRNA">
    <property type="protein sequence ID" value="YKR094C"/>
    <property type="gene ID" value="YKR094C"/>
</dbReference>
<dbReference type="GeneID" id="854658"/>
<dbReference type="KEGG" id="sce:YIL148W"/>
<dbReference type="KEGG" id="sce:YKR094C"/>
<dbReference type="AGR" id="SGD:S000001410"/>
<dbReference type="SGD" id="S000001410">
    <property type="gene designation" value="RPL40A"/>
</dbReference>
<dbReference type="VEuPathDB" id="FungiDB:YIL148W"/>
<dbReference type="VEuPathDB" id="FungiDB:YKR094C"/>
<dbReference type="eggNOG" id="KOG0003">
    <property type="taxonomic scope" value="Eukaryota"/>
</dbReference>
<dbReference type="HOGENOM" id="CLU_010412_3_4_1"/>
<dbReference type="InParanoid" id="P0CH08"/>
<dbReference type="OMA" id="CGRCSQL"/>
<dbReference type="OrthoDB" id="428577at2759"/>
<dbReference type="BioCyc" id="YEAST:G3O-31397-MONOMER"/>
<dbReference type="BioGRID-ORCS" id="853969">
    <property type="hits" value="0 hits in 10 CRISPR screens"/>
</dbReference>
<dbReference type="BioGRID-ORCS" id="854658">
    <property type="hits" value="1 hit in 10 CRISPR screens"/>
</dbReference>
<dbReference type="PRO" id="PR:P0CH08"/>
<dbReference type="Proteomes" id="UP000002311">
    <property type="component" value="Chromosome IX"/>
</dbReference>
<dbReference type="RNAct" id="P0CH08">
    <property type="molecule type" value="protein"/>
</dbReference>
<dbReference type="ExpressionAtlas" id="P0CH08">
    <property type="expression patterns" value="baseline and differential"/>
</dbReference>
<dbReference type="GO" id="GO:0005737">
    <property type="term" value="C:cytoplasm"/>
    <property type="evidence" value="ECO:0007005"/>
    <property type="project" value="SGD"/>
</dbReference>
<dbReference type="GO" id="GO:0005829">
    <property type="term" value="C:cytosol"/>
    <property type="evidence" value="ECO:0000304"/>
    <property type="project" value="Reactome"/>
</dbReference>
<dbReference type="GO" id="GO:0022625">
    <property type="term" value="C:cytosolic large ribosomal subunit"/>
    <property type="evidence" value="ECO:0000314"/>
    <property type="project" value="SGD"/>
</dbReference>
<dbReference type="GO" id="GO:0005634">
    <property type="term" value="C:nucleus"/>
    <property type="evidence" value="ECO:0007005"/>
    <property type="project" value="SGD"/>
</dbReference>
<dbReference type="GO" id="GO:0031386">
    <property type="term" value="F:protein tag activity"/>
    <property type="evidence" value="ECO:0000250"/>
    <property type="project" value="SGD"/>
</dbReference>
<dbReference type="GO" id="GO:0003735">
    <property type="term" value="F:structural constituent of ribosome"/>
    <property type="evidence" value="ECO:0000305"/>
    <property type="project" value="SGD"/>
</dbReference>
<dbReference type="GO" id="GO:0031625">
    <property type="term" value="F:ubiquitin protein ligase binding"/>
    <property type="evidence" value="ECO:0000318"/>
    <property type="project" value="GO_Central"/>
</dbReference>
<dbReference type="GO" id="GO:0002181">
    <property type="term" value="P:cytoplasmic translation"/>
    <property type="evidence" value="ECO:0000305"/>
    <property type="project" value="SGD"/>
</dbReference>
<dbReference type="GO" id="GO:0019941">
    <property type="term" value="P:modification-dependent protein catabolic process"/>
    <property type="evidence" value="ECO:0000318"/>
    <property type="project" value="GO_Central"/>
</dbReference>
<dbReference type="GO" id="GO:0016567">
    <property type="term" value="P:protein ubiquitination"/>
    <property type="evidence" value="ECO:0000315"/>
    <property type="project" value="SGD"/>
</dbReference>
<dbReference type="GO" id="GO:0000027">
    <property type="term" value="P:ribosomal large subunit assembly"/>
    <property type="evidence" value="ECO:0000315"/>
    <property type="project" value="SGD"/>
</dbReference>
<dbReference type="GO" id="GO:0000055">
    <property type="term" value="P:ribosomal large subunit export from nucleus"/>
    <property type="evidence" value="ECO:0000315"/>
    <property type="project" value="SGD"/>
</dbReference>
<dbReference type="GO" id="GO:0042254">
    <property type="term" value="P:ribosome biogenesis"/>
    <property type="evidence" value="ECO:0000314"/>
    <property type="project" value="SGD"/>
</dbReference>
<dbReference type="CDD" id="cd01803">
    <property type="entry name" value="Ubl_ubiquitin"/>
    <property type="match status" value="1"/>
</dbReference>
<dbReference type="FunFam" id="3.10.20.90:FF:000014">
    <property type="entry name" value="Ubiquitin-60S ribosomal L40 fusion"/>
    <property type="match status" value="1"/>
</dbReference>
<dbReference type="FunFam" id="4.10.1060.50:FF:000001">
    <property type="entry name" value="ubiquitin-60S ribosomal protein L40"/>
    <property type="match status" value="1"/>
</dbReference>
<dbReference type="Gene3D" id="4.10.1060.50">
    <property type="match status" value="1"/>
</dbReference>
<dbReference type="Gene3D" id="3.10.20.90">
    <property type="entry name" value="Phosphatidylinositol 3-kinase Catalytic Subunit, Chain A, domain 1"/>
    <property type="match status" value="1"/>
</dbReference>
<dbReference type="InterPro" id="IPR001975">
    <property type="entry name" value="Ribosomal_eL40_dom"/>
</dbReference>
<dbReference type="InterPro" id="IPR038587">
    <property type="entry name" value="Ribosomal_eL40_sf"/>
</dbReference>
<dbReference type="InterPro" id="IPR000626">
    <property type="entry name" value="Ubiquitin-like_dom"/>
</dbReference>
<dbReference type="InterPro" id="IPR029071">
    <property type="entry name" value="Ubiquitin-like_domsf"/>
</dbReference>
<dbReference type="InterPro" id="IPR019954">
    <property type="entry name" value="Ubiquitin_CS"/>
</dbReference>
<dbReference type="InterPro" id="IPR019956">
    <property type="entry name" value="Ubiquitin_dom"/>
</dbReference>
<dbReference type="InterPro" id="IPR050158">
    <property type="entry name" value="Ubiquitin_ubiquitin-like"/>
</dbReference>
<dbReference type="PANTHER" id="PTHR10666">
    <property type="entry name" value="UBIQUITIN"/>
    <property type="match status" value="1"/>
</dbReference>
<dbReference type="Pfam" id="PF01020">
    <property type="entry name" value="Ribosomal_L40e"/>
    <property type="match status" value="1"/>
</dbReference>
<dbReference type="Pfam" id="PF00240">
    <property type="entry name" value="ubiquitin"/>
    <property type="match status" value="1"/>
</dbReference>
<dbReference type="PRINTS" id="PR00348">
    <property type="entry name" value="UBIQUITIN"/>
</dbReference>
<dbReference type="SMART" id="SM01377">
    <property type="entry name" value="Ribosomal_L40e"/>
    <property type="match status" value="1"/>
</dbReference>
<dbReference type="SMART" id="SM00213">
    <property type="entry name" value="UBQ"/>
    <property type="match status" value="1"/>
</dbReference>
<dbReference type="SUPFAM" id="SSF54236">
    <property type="entry name" value="Ubiquitin-like"/>
    <property type="match status" value="1"/>
</dbReference>
<dbReference type="PROSITE" id="PS00299">
    <property type="entry name" value="UBIQUITIN_1"/>
    <property type="match status" value="1"/>
</dbReference>
<dbReference type="PROSITE" id="PS50053">
    <property type="entry name" value="UBIQUITIN_2"/>
    <property type="match status" value="1"/>
</dbReference>
<keyword id="KW-0002">3D-structure</keyword>
<keyword id="KW-0963">Cytoplasm</keyword>
<keyword id="KW-1017">Isopeptide bond</keyword>
<keyword id="KW-0539">Nucleus</keyword>
<keyword id="KW-1185">Reference proteome</keyword>
<keyword id="KW-0687">Ribonucleoprotein</keyword>
<keyword id="KW-0689">Ribosomal protein</keyword>
<keyword id="KW-0832">Ubl conjugation</keyword>
<comment type="function">
    <molecule>Ubiquitin</molecule>
    <text evidence="1">Exists either covalently attached to another protein, or free (unanchored). When covalently bound, it is conjugated to target proteins via an isopeptide bond either as a monomer (monoubiquitin), a polymer linked via different Lys residues of the ubiquitin (polyubiquitin chains) or a linear polymer linked via the initiator Met of the ubiquitin (linear polyubiquitin chains). Polyubiquitin chains, when attached to a target protein, have different functions depending on the Lys residue of the ubiquitin that is linked: Lys-6-linked may be involved in DNA repair; Lys-11-linked is involved in ERAD (endoplasmic reticulum-associated degradation) and in cell-cycle regulation; Lys-29-linked is involved in lysosomal degradation; Lys-33-linked is involved in kinase modification; Lys-48-linked is involved in protein degradation via the proteasome; Lys-63-linked is involved in endocytosis, and DNA-damage responses. Linear polymer chains formed via attachment by the initiator Met lead to cell signaling. Ubiquitin is usually conjugated to Lys residues of target proteins, however, in rare cases, conjugation to Cys or Ser residues has been observed. When polyubiquitin is free (unanchored-polyubiquitin), it also has distinct roles, such as in activation of protein kinases, and in signaling (By similarity).</text>
</comment>
<comment type="function">
    <molecule>Large ribosomal subunit protein eL40A</molecule>
    <text evidence="5 10">Component of the ribosome, a large ribonucleoprotein complex responsible for the synthesis of proteins in the cell. The small ribosomal subunit (SSU) binds messenger RNAs (mRNAs) and translates the encoded message by selecting cognate aminoacyl-transfer RNA (tRNA) molecules. The large subunit (LSU) contains the ribosomal catalytic site termed the peptidyl transferase center (PTC), which catalyzes the formation of peptide bonds, thereby polymerizing the amino acids delivered by tRNAs into a polypeptide chain. The nascent polypeptides leave the ribosome through a tunnel in the LSU and interact with protein factors that function in enzymatic processing, targeting, and the membrane insertion of nascent chains at the exit of the ribosomal tunnel (PubMed:22096102). eL40 is essential for translation of a subset of cellular transcripts, including stress response transcripts, such as DDR2 (PubMed:23169626).</text>
</comment>
<comment type="subunit">
    <molecule>Large ribosomal subunit protein eL40A</molecule>
    <text evidence="4 12">Component of the large ribosomal subunit (LSU). Mature yeast ribosomes consist of a small (40S) and a large (60S) subunit. The 40S small subunit contains 1 molecule of ribosomal RNA (18S rRNA) and 33 different proteins (encoded by 57 genes). The large 60S subunit contains 3 rRNA molecules (25S, 5.8S and 5S rRNA) and 46 different proteins (encoded by 81 genes) (PubMed:22096102, PubMed:9559554).</text>
</comment>
<comment type="subcellular location">
    <molecule>Ubiquitin</molecule>
    <subcellularLocation>
        <location evidence="1">Cytoplasm</location>
    </subcellularLocation>
    <subcellularLocation>
        <location evidence="1">Nucleus</location>
    </subcellularLocation>
</comment>
<comment type="subcellular location">
    <molecule>Large ribosomal subunit protein eL40A</molecule>
    <subcellularLocation>
        <location evidence="4">Cytoplasm</location>
    </subcellularLocation>
</comment>
<comment type="miscellaneous">
    <text evidence="11">Ubiquitin is encoded by several different genes. UBI1 and UBI2 genes code for a single copy of ubiquitin fused to the ribosomal proteins eL40A and eL40B, respectively. UBI3 is a polyprotein with one copy of ubiquitin fused to ribosomal protein eS31. UBI4 is a polyprotein containing 5 exact head to tail repeats of ubiquitin.</text>
</comment>
<comment type="miscellaneous">
    <text evidence="3">The 60S ribosomal protein L40 is present with 40000 molecules/cell in log phase SD medium.</text>
</comment>
<comment type="similarity">
    <text evidence="9">In the N-terminal section; belongs to the ubiquitin family.</text>
</comment>
<comment type="similarity">
    <text evidence="9">In the C-terminal section; belongs to the eukaryotic ribosomal protein eL40 family.</text>
</comment>
<accession>P0CH08</accession>
<accession>D6VVD9</accession>
<accession>P04838</accession>
<accession>P14796</accession>
<accession>P61864</accession>
<accession>Q6LA96</accession>
<gene>
    <name evidence="8" type="primary">RPL40A</name>
    <name type="synonym">UBI1</name>
    <name type="ordered locus">YIL148W</name>
</gene>
<name>RL40A_YEAST</name>
<evidence type="ECO:0000250" key="1"/>
<evidence type="ECO:0000255" key="2">
    <source>
        <dbReference type="PROSITE-ProRule" id="PRU00214"/>
    </source>
</evidence>
<evidence type="ECO:0000269" key="3">
    <source>
    </source>
</evidence>
<evidence type="ECO:0000269" key="4">
    <source>
    </source>
</evidence>
<evidence type="ECO:0000269" key="5">
    <source>
    </source>
</evidence>
<evidence type="ECO:0000269" key="6">
    <source>
    </source>
</evidence>
<evidence type="ECO:0000303" key="7">
    <source>
    </source>
</evidence>
<evidence type="ECO:0000303" key="8">
    <source>
    </source>
</evidence>
<evidence type="ECO:0000305" key="9"/>
<evidence type="ECO:0000305" key="10">
    <source>
    </source>
</evidence>
<evidence type="ECO:0000305" key="11">
    <source>
    </source>
</evidence>
<evidence type="ECO:0000305" key="12">
    <source>
    </source>
</evidence>
<evidence type="ECO:0007744" key="13">
    <source>
    </source>
</evidence>
<evidence type="ECO:0007829" key="14">
    <source>
        <dbReference type="PDB" id="6NYO"/>
    </source>
</evidence>
<evidence type="ECO:0007829" key="15">
    <source>
        <dbReference type="PDB" id="8DAS"/>
    </source>
</evidence>
<organism>
    <name type="scientific">Saccharomyces cerevisiae (strain ATCC 204508 / S288c)</name>
    <name type="common">Baker's yeast</name>
    <dbReference type="NCBI Taxonomy" id="559292"/>
    <lineage>
        <taxon>Eukaryota</taxon>
        <taxon>Fungi</taxon>
        <taxon>Dikarya</taxon>
        <taxon>Ascomycota</taxon>
        <taxon>Saccharomycotina</taxon>
        <taxon>Saccharomycetes</taxon>
        <taxon>Saccharomycetales</taxon>
        <taxon>Saccharomycetaceae</taxon>
        <taxon>Saccharomyces</taxon>
    </lineage>
</organism>